<accession>Q8CSG0</accession>
<proteinExistence type="inferred from homology"/>
<organism>
    <name type="scientific">Staphylococcus epidermidis (strain ATCC 12228 / FDA PCI 1200)</name>
    <dbReference type="NCBI Taxonomy" id="176280"/>
    <lineage>
        <taxon>Bacteria</taxon>
        <taxon>Bacillati</taxon>
        <taxon>Bacillota</taxon>
        <taxon>Bacilli</taxon>
        <taxon>Bacillales</taxon>
        <taxon>Staphylococcaceae</taxon>
        <taxon>Staphylococcus</taxon>
    </lineage>
</organism>
<name>ARGB_STAES</name>
<protein>
    <recommendedName>
        <fullName evidence="1">Acetylglutamate kinase</fullName>
        <ecNumber evidence="1">2.7.2.8</ecNumber>
    </recommendedName>
    <alternativeName>
        <fullName evidence="1">N-acetyl-L-glutamate 5-phosphotransferase</fullName>
    </alternativeName>
    <alternativeName>
        <fullName evidence="1">NAG kinase</fullName>
        <shortName evidence="1">NAGK</shortName>
    </alternativeName>
</protein>
<dbReference type="EC" id="2.7.2.8" evidence="1"/>
<dbReference type="EMBL" id="AE015929">
    <property type="protein sequence ID" value="AAO04809.1"/>
    <property type="molecule type" value="Genomic_DNA"/>
</dbReference>
<dbReference type="RefSeq" id="NP_764765.1">
    <property type="nucleotide sequence ID" value="NC_004461.1"/>
</dbReference>
<dbReference type="RefSeq" id="WP_001830946.1">
    <property type="nucleotide sequence ID" value="NZ_WBME01000006.1"/>
</dbReference>
<dbReference type="SMR" id="Q8CSG0"/>
<dbReference type="GeneID" id="50018672"/>
<dbReference type="KEGG" id="sep:SE_1210"/>
<dbReference type="PATRIC" id="fig|176280.10.peg.1180"/>
<dbReference type="eggNOG" id="COG0548">
    <property type="taxonomic scope" value="Bacteria"/>
</dbReference>
<dbReference type="HOGENOM" id="CLU_053680_1_0_9"/>
<dbReference type="OrthoDB" id="9803155at2"/>
<dbReference type="UniPathway" id="UPA00068">
    <property type="reaction ID" value="UER00107"/>
</dbReference>
<dbReference type="Proteomes" id="UP000001411">
    <property type="component" value="Chromosome"/>
</dbReference>
<dbReference type="GO" id="GO:0005737">
    <property type="term" value="C:cytoplasm"/>
    <property type="evidence" value="ECO:0007669"/>
    <property type="project" value="UniProtKB-SubCell"/>
</dbReference>
<dbReference type="GO" id="GO:0003991">
    <property type="term" value="F:acetylglutamate kinase activity"/>
    <property type="evidence" value="ECO:0007669"/>
    <property type="project" value="UniProtKB-UniRule"/>
</dbReference>
<dbReference type="GO" id="GO:0005524">
    <property type="term" value="F:ATP binding"/>
    <property type="evidence" value="ECO:0007669"/>
    <property type="project" value="UniProtKB-UniRule"/>
</dbReference>
<dbReference type="GO" id="GO:0042450">
    <property type="term" value="P:arginine biosynthetic process via ornithine"/>
    <property type="evidence" value="ECO:0007669"/>
    <property type="project" value="UniProtKB-UniRule"/>
</dbReference>
<dbReference type="GO" id="GO:0006526">
    <property type="term" value="P:L-arginine biosynthetic process"/>
    <property type="evidence" value="ECO:0007669"/>
    <property type="project" value="UniProtKB-UniPathway"/>
</dbReference>
<dbReference type="CDD" id="cd04238">
    <property type="entry name" value="AAK_NAGK-like"/>
    <property type="match status" value="1"/>
</dbReference>
<dbReference type="Gene3D" id="3.40.1160.10">
    <property type="entry name" value="Acetylglutamate kinase-like"/>
    <property type="match status" value="1"/>
</dbReference>
<dbReference type="HAMAP" id="MF_00082">
    <property type="entry name" value="ArgB"/>
    <property type="match status" value="1"/>
</dbReference>
<dbReference type="InterPro" id="IPR036393">
    <property type="entry name" value="AceGlu_kinase-like_sf"/>
</dbReference>
<dbReference type="InterPro" id="IPR004662">
    <property type="entry name" value="AcgluKinase_fam"/>
</dbReference>
<dbReference type="InterPro" id="IPR037528">
    <property type="entry name" value="ArgB"/>
</dbReference>
<dbReference type="InterPro" id="IPR001048">
    <property type="entry name" value="Asp/Glu/Uridylate_kinase"/>
</dbReference>
<dbReference type="NCBIfam" id="TIGR00761">
    <property type="entry name" value="argB"/>
    <property type="match status" value="1"/>
</dbReference>
<dbReference type="PANTHER" id="PTHR23342">
    <property type="entry name" value="N-ACETYLGLUTAMATE SYNTHASE"/>
    <property type="match status" value="1"/>
</dbReference>
<dbReference type="PANTHER" id="PTHR23342:SF0">
    <property type="entry name" value="N-ACETYLGLUTAMATE SYNTHASE, MITOCHONDRIAL"/>
    <property type="match status" value="1"/>
</dbReference>
<dbReference type="Pfam" id="PF00696">
    <property type="entry name" value="AA_kinase"/>
    <property type="match status" value="1"/>
</dbReference>
<dbReference type="PIRSF" id="PIRSF000728">
    <property type="entry name" value="NAGK"/>
    <property type="match status" value="1"/>
</dbReference>
<dbReference type="SUPFAM" id="SSF53633">
    <property type="entry name" value="Carbamate kinase-like"/>
    <property type="match status" value="1"/>
</dbReference>
<comment type="function">
    <text evidence="1">Catalyzes the ATP-dependent phosphorylation of N-acetyl-L-glutamate.</text>
</comment>
<comment type="catalytic activity">
    <reaction evidence="1">
        <text>N-acetyl-L-glutamate + ATP = N-acetyl-L-glutamyl 5-phosphate + ADP</text>
        <dbReference type="Rhea" id="RHEA:14629"/>
        <dbReference type="ChEBI" id="CHEBI:30616"/>
        <dbReference type="ChEBI" id="CHEBI:44337"/>
        <dbReference type="ChEBI" id="CHEBI:57936"/>
        <dbReference type="ChEBI" id="CHEBI:456216"/>
        <dbReference type="EC" id="2.7.2.8"/>
    </reaction>
</comment>
<comment type="pathway">
    <text evidence="1">Amino-acid biosynthesis; L-arginine biosynthesis; N(2)-acetyl-L-ornithine from L-glutamate: step 2/4.</text>
</comment>
<comment type="subcellular location">
    <subcellularLocation>
        <location evidence="1">Cytoplasm</location>
    </subcellularLocation>
</comment>
<comment type="similarity">
    <text evidence="1">Belongs to the acetylglutamate kinase family. ArgB subfamily.</text>
</comment>
<gene>
    <name evidence="1" type="primary">argB</name>
    <name type="ordered locus">SE_1210</name>
</gene>
<keyword id="KW-0028">Amino-acid biosynthesis</keyword>
<keyword id="KW-0055">Arginine biosynthesis</keyword>
<keyword id="KW-0067">ATP-binding</keyword>
<keyword id="KW-0963">Cytoplasm</keyword>
<keyword id="KW-0418">Kinase</keyword>
<keyword id="KW-0547">Nucleotide-binding</keyword>
<keyword id="KW-0808">Transferase</keyword>
<evidence type="ECO:0000255" key="1">
    <source>
        <dbReference type="HAMAP-Rule" id="MF_00082"/>
    </source>
</evidence>
<feature type="chain" id="PRO_0000112668" description="Acetylglutamate kinase">
    <location>
        <begin position="1"/>
        <end position="245"/>
    </location>
</feature>
<feature type="binding site" evidence="1">
    <location>
        <begin position="41"/>
        <end position="42"/>
    </location>
    <ligand>
        <name>substrate</name>
    </ligand>
</feature>
<feature type="binding site" evidence="1">
    <location>
        <position position="63"/>
    </location>
    <ligand>
        <name>substrate</name>
    </ligand>
</feature>
<feature type="binding site" evidence="1">
    <location>
        <position position="156"/>
    </location>
    <ligand>
        <name>substrate</name>
    </ligand>
</feature>
<feature type="site" description="Transition state stabilizer" evidence="1">
    <location>
        <position position="8"/>
    </location>
</feature>
<feature type="site" description="Transition state stabilizer" evidence="1">
    <location>
        <position position="215"/>
    </location>
</feature>
<sequence length="245" mass="27265">MKNIIVIKLGGIAIENLNDAFIQQINAWHLENKKIIIVHGGGQVISNLLTKNNHSTIKIDGMRVTAKNDLPIIYDALINIVGHQLLERLKESNLEFFQFKEKIKELVSAEFLNKNIYGYVGKVKEINTMLLEKMLSRDIIPIITSLGVNEQGEYLNVNADHLATAIAKKLKVEKLVYMTDVPGVIEKDKTLATLTINEAKTKIENKIITGGMIPKIESAIQTLESGVESILIANNLQKGTIIRGD</sequence>
<reference key="1">
    <citation type="journal article" date="2003" name="Mol. Microbiol.">
        <title>Genome-based analysis of virulence genes in a non-biofilm-forming Staphylococcus epidermidis strain (ATCC 12228).</title>
        <authorList>
            <person name="Zhang Y.-Q."/>
            <person name="Ren S.-X."/>
            <person name="Li H.-L."/>
            <person name="Wang Y.-X."/>
            <person name="Fu G."/>
            <person name="Yang J."/>
            <person name="Qin Z.-Q."/>
            <person name="Miao Y.-G."/>
            <person name="Wang W.-Y."/>
            <person name="Chen R.-S."/>
            <person name="Shen Y."/>
            <person name="Chen Z."/>
            <person name="Yuan Z.-H."/>
            <person name="Zhao G.-P."/>
            <person name="Qu D."/>
            <person name="Danchin A."/>
            <person name="Wen Y.-M."/>
        </authorList>
    </citation>
    <scope>NUCLEOTIDE SEQUENCE [LARGE SCALE GENOMIC DNA]</scope>
    <source>
        <strain>ATCC 12228 / FDA PCI 1200</strain>
    </source>
</reference>